<organism>
    <name type="scientific">Clostridium perfringens (strain 13 / Type A)</name>
    <dbReference type="NCBI Taxonomy" id="195102"/>
    <lineage>
        <taxon>Bacteria</taxon>
        <taxon>Bacillati</taxon>
        <taxon>Bacillota</taxon>
        <taxon>Clostridia</taxon>
        <taxon>Eubacteriales</taxon>
        <taxon>Clostridiaceae</taxon>
        <taxon>Clostridium</taxon>
    </lineage>
</organism>
<gene>
    <name evidence="1" type="primary">cobB</name>
    <name type="ordered locus">CPE0256</name>
</gene>
<proteinExistence type="inferred from homology"/>
<evidence type="ECO:0000255" key="1">
    <source>
        <dbReference type="HAMAP-Rule" id="MF_01968"/>
    </source>
</evidence>
<evidence type="ECO:0000255" key="2">
    <source>
        <dbReference type="PROSITE-ProRule" id="PRU00236"/>
    </source>
</evidence>
<protein>
    <recommendedName>
        <fullName evidence="1">NAD-dependent protein deacetylase</fullName>
        <ecNumber evidence="1 2">2.3.1.286</ecNumber>
    </recommendedName>
    <alternativeName>
        <fullName evidence="1">Regulatory protein SIR2 homolog</fullName>
    </alternativeName>
</protein>
<comment type="function">
    <text evidence="1">NAD-dependent protein deacetylase which modulates the activities of several enzymes which are inactive in their acetylated form.</text>
</comment>
<comment type="catalytic activity">
    <reaction evidence="1">
        <text>N(6)-acetyl-L-lysyl-[protein] + NAD(+) + H2O = 2''-O-acetyl-ADP-D-ribose + nicotinamide + L-lysyl-[protein]</text>
        <dbReference type="Rhea" id="RHEA:43636"/>
        <dbReference type="Rhea" id="RHEA-COMP:9752"/>
        <dbReference type="Rhea" id="RHEA-COMP:10731"/>
        <dbReference type="ChEBI" id="CHEBI:15377"/>
        <dbReference type="ChEBI" id="CHEBI:17154"/>
        <dbReference type="ChEBI" id="CHEBI:29969"/>
        <dbReference type="ChEBI" id="CHEBI:57540"/>
        <dbReference type="ChEBI" id="CHEBI:61930"/>
        <dbReference type="ChEBI" id="CHEBI:83767"/>
        <dbReference type="EC" id="2.3.1.286"/>
    </reaction>
</comment>
<comment type="cofactor">
    <cofactor evidence="1">
        <name>Zn(2+)</name>
        <dbReference type="ChEBI" id="CHEBI:29105"/>
    </cofactor>
    <text evidence="1">Binds 1 zinc ion per subunit.</text>
</comment>
<comment type="subcellular location">
    <subcellularLocation>
        <location evidence="1">Cytoplasm</location>
    </subcellularLocation>
</comment>
<comment type="similarity">
    <text evidence="1">Belongs to the sirtuin family. Class U subfamily.</text>
</comment>
<accession>Q8XNS6</accession>
<name>NPD_CLOPE</name>
<feature type="chain" id="PRO_0000110306" description="NAD-dependent protein deacetylase">
    <location>
        <begin position="1"/>
        <end position="244"/>
    </location>
</feature>
<feature type="domain" description="Deacetylase sirtuin-type" evidence="2">
    <location>
        <begin position="1"/>
        <end position="244"/>
    </location>
</feature>
<feature type="active site" description="Proton acceptor" evidence="2">
    <location>
        <position position="123"/>
    </location>
</feature>
<feature type="binding site" evidence="1">
    <location>
        <position position="24"/>
    </location>
    <ligand>
        <name>NAD(+)</name>
        <dbReference type="ChEBI" id="CHEBI:57540"/>
    </ligand>
</feature>
<feature type="binding site" evidence="1">
    <location>
        <position position="28"/>
    </location>
    <ligand>
        <name>NAD(+)</name>
        <dbReference type="ChEBI" id="CHEBI:57540"/>
    </ligand>
</feature>
<feature type="binding site" evidence="1">
    <location>
        <position position="35"/>
    </location>
    <ligand>
        <name>NAD(+)</name>
        <dbReference type="ChEBI" id="CHEBI:57540"/>
    </ligand>
</feature>
<feature type="binding site" evidence="1">
    <location>
        <position position="35"/>
    </location>
    <ligand>
        <name>nicotinamide</name>
        <dbReference type="ChEBI" id="CHEBI:17154"/>
    </ligand>
</feature>
<feature type="binding site" evidence="1">
    <location>
        <position position="36"/>
    </location>
    <ligand>
        <name>NAD(+)</name>
        <dbReference type="ChEBI" id="CHEBI:57540"/>
    </ligand>
</feature>
<feature type="binding site" evidence="1">
    <location>
        <position position="105"/>
    </location>
    <ligand>
        <name>NAD(+)</name>
        <dbReference type="ChEBI" id="CHEBI:57540"/>
    </ligand>
</feature>
<feature type="binding site" evidence="1">
    <location>
        <position position="107"/>
    </location>
    <ligand>
        <name>NAD(+)</name>
        <dbReference type="ChEBI" id="CHEBI:57540"/>
    </ligand>
</feature>
<feature type="binding site" evidence="1">
    <location>
        <position position="107"/>
    </location>
    <ligand>
        <name>nicotinamide</name>
        <dbReference type="ChEBI" id="CHEBI:17154"/>
    </ligand>
</feature>
<feature type="binding site" evidence="1">
    <location>
        <position position="108"/>
    </location>
    <ligand>
        <name>NAD(+)</name>
        <dbReference type="ChEBI" id="CHEBI:57540"/>
    </ligand>
</feature>
<feature type="binding site" evidence="1">
    <location>
        <position position="108"/>
    </location>
    <ligand>
        <name>nicotinamide</name>
        <dbReference type="ChEBI" id="CHEBI:17154"/>
    </ligand>
</feature>
<feature type="binding site" evidence="1">
    <location>
        <position position="123"/>
    </location>
    <ligand>
        <name>NAD(+)</name>
        <dbReference type="ChEBI" id="CHEBI:57540"/>
    </ligand>
</feature>
<feature type="binding site" evidence="1">
    <location>
        <position position="131"/>
    </location>
    <ligand>
        <name>Zn(2+)</name>
        <dbReference type="ChEBI" id="CHEBI:29105"/>
    </ligand>
</feature>
<feature type="binding site" evidence="1">
    <location>
        <position position="134"/>
    </location>
    <ligand>
        <name>Zn(2+)</name>
        <dbReference type="ChEBI" id="CHEBI:29105"/>
    </ligand>
</feature>
<feature type="binding site" evidence="1">
    <location>
        <position position="152"/>
    </location>
    <ligand>
        <name>Zn(2+)</name>
        <dbReference type="ChEBI" id="CHEBI:29105"/>
    </ligand>
</feature>
<feature type="binding site" evidence="1">
    <location>
        <position position="155"/>
    </location>
    <ligand>
        <name>Zn(2+)</name>
        <dbReference type="ChEBI" id="CHEBI:29105"/>
    </ligand>
</feature>
<feature type="binding site" evidence="1">
    <location>
        <position position="193"/>
    </location>
    <ligand>
        <name>NAD(+)</name>
        <dbReference type="ChEBI" id="CHEBI:57540"/>
    </ligand>
</feature>
<feature type="binding site" evidence="1">
    <location>
        <position position="194"/>
    </location>
    <ligand>
        <name>NAD(+)</name>
        <dbReference type="ChEBI" id="CHEBI:57540"/>
    </ligand>
</feature>
<feature type="binding site" evidence="1">
    <location>
        <position position="217"/>
    </location>
    <ligand>
        <name>NAD(+)</name>
        <dbReference type="ChEBI" id="CHEBI:57540"/>
    </ligand>
</feature>
<feature type="binding site" evidence="1">
    <location>
        <position position="235"/>
    </location>
    <ligand>
        <name>NAD(+)</name>
        <dbReference type="ChEBI" id="CHEBI:57540"/>
    </ligand>
</feature>
<keyword id="KW-0963">Cytoplasm</keyword>
<keyword id="KW-0479">Metal-binding</keyword>
<keyword id="KW-0520">NAD</keyword>
<keyword id="KW-1185">Reference proteome</keyword>
<keyword id="KW-0808">Transferase</keyword>
<keyword id="KW-0862">Zinc</keyword>
<reference key="1">
    <citation type="journal article" date="2002" name="Proc. Natl. Acad. Sci. U.S.A.">
        <title>Complete genome sequence of Clostridium perfringens, an anaerobic flesh-eater.</title>
        <authorList>
            <person name="Shimizu T."/>
            <person name="Ohtani K."/>
            <person name="Hirakawa H."/>
            <person name="Ohshima K."/>
            <person name="Yamashita A."/>
            <person name="Shiba T."/>
            <person name="Ogasawara N."/>
            <person name="Hattori M."/>
            <person name="Kuhara S."/>
            <person name="Hayashi H."/>
        </authorList>
    </citation>
    <scope>NUCLEOTIDE SEQUENCE [LARGE SCALE GENOMIC DNA]</scope>
    <source>
        <strain>13 / Type A</strain>
    </source>
</reference>
<dbReference type="EC" id="2.3.1.286" evidence="1 2"/>
<dbReference type="EMBL" id="BA000016">
    <property type="protein sequence ID" value="BAB79962.1"/>
    <property type="molecule type" value="Genomic_DNA"/>
</dbReference>
<dbReference type="RefSeq" id="WP_011009705.1">
    <property type="nucleotide sequence ID" value="NC_003366.1"/>
</dbReference>
<dbReference type="SMR" id="Q8XNS6"/>
<dbReference type="STRING" id="195102.gene:10489505"/>
<dbReference type="KEGG" id="cpe:CPE0256"/>
<dbReference type="HOGENOM" id="CLU_023643_3_0_9"/>
<dbReference type="Proteomes" id="UP000000818">
    <property type="component" value="Chromosome"/>
</dbReference>
<dbReference type="GO" id="GO:0005737">
    <property type="term" value="C:cytoplasm"/>
    <property type="evidence" value="ECO:0007669"/>
    <property type="project" value="UniProtKB-SubCell"/>
</dbReference>
<dbReference type="GO" id="GO:0017136">
    <property type="term" value="F:histone deacetylase activity, NAD-dependent"/>
    <property type="evidence" value="ECO:0007669"/>
    <property type="project" value="TreeGrafter"/>
</dbReference>
<dbReference type="GO" id="GO:0070403">
    <property type="term" value="F:NAD+ binding"/>
    <property type="evidence" value="ECO:0007669"/>
    <property type="project" value="UniProtKB-UniRule"/>
</dbReference>
<dbReference type="GO" id="GO:0008270">
    <property type="term" value="F:zinc ion binding"/>
    <property type="evidence" value="ECO:0007669"/>
    <property type="project" value="UniProtKB-UniRule"/>
</dbReference>
<dbReference type="CDD" id="cd01411">
    <property type="entry name" value="SIR2H"/>
    <property type="match status" value="1"/>
</dbReference>
<dbReference type="Gene3D" id="3.30.1600.10">
    <property type="entry name" value="SIR2/SIRT2 'Small Domain"/>
    <property type="match status" value="1"/>
</dbReference>
<dbReference type="Gene3D" id="3.40.50.1220">
    <property type="entry name" value="TPP-binding domain"/>
    <property type="match status" value="1"/>
</dbReference>
<dbReference type="HAMAP" id="MF_01968">
    <property type="entry name" value="Sirtuin_ClassU"/>
    <property type="match status" value="1"/>
</dbReference>
<dbReference type="InterPro" id="IPR029035">
    <property type="entry name" value="DHS-like_NAD/FAD-binding_dom"/>
</dbReference>
<dbReference type="InterPro" id="IPR050134">
    <property type="entry name" value="NAD-dep_sirtuin_deacylases"/>
</dbReference>
<dbReference type="InterPro" id="IPR003000">
    <property type="entry name" value="Sirtuin"/>
</dbReference>
<dbReference type="InterPro" id="IPR026591">
    <property type="entry name" value="Sirtuin_cat_small_dom_sf"/>
</dbReference>
<dbReference type="InterPro" id="IPR028628">
    <property type="entry name" value="Sirtuin_class_U"/>
</dbReference>
<dbReference type="InterPro" id="IPR026590">
    <property type="entry name" value="Ssirtuin_cat_dom"/>
</dbReference>
<dbReference type="NCBIfam" id="NF001752">
    <property type="entry name" value="PRK00481.1-1"/>
    <property type="match status" value="1"/>
</dbReference>
<dbReference type="NCBIfam" id="NF001753">
    <property type="entry name" value="PRK00481.1-3"/>
    <property type="match status" value="1"/>
</dbReference>
<dbReference type="PANTHER" id="PTHR11085:SF4">
    <property type="entry name" value="NAD-DEPENDENT PROTEIN DEACYLASE"/>
    <property type="match status" value="1"/>
</dbReference>
<dbReference type="PANTHER" id="PTHR11085">
    <property type="entry name" value="NAD-DEPENDENT PROTEIN DEACYLASE SIRTUIN-5, MITOCHONDRIAL-RELATED"/>
    <property type="match status" value="1"/>
</dbReference>
<dbReference type="Pfam" id="PF02146">
    <property type="entry name" value="SIR2"/>
    <property type="match status" value="1"/>
</dbReference>
<dbReference type="SUPFAM" id="SSF52467">
    <property type="entry name" value="DHS-like NAD/FAD-binding domain"/>
    <property type="match status" value="1"/>
</dbReference>
<dbReference type="PROSITE" id="PS50305">
    <property type="entry name" value="SIRTUIN"/>
    <property type="match status" value="1"/>
</dbReference>
<sequence length="244" mass="26961">MDDKINKLKEIIKNSNNIVFFGGAGVSTESGIPDFRSANGLFNEKLNITFTPEQLVSHSFFERYPEEFFNFYKAKLIYPNSKPNDAHIALAKLEEMGKLKAIVTQNIDGLHQMAGSKNVFELHGSVLRNYCVDCHTFYDEKFILESKGVPKCTKCGGIVKPDVVLYEEPLDDNVIRGAIDAISKADTLIIGGTSLVVYPAAGLINYYFRGKNLVLINKSSTQADSKADLVINDSIGKVLGKVID</sequence>